<protein>
    <recommendedName>
        <fullName evidence="1">GTPase Obg</fullName>
        <ecNumber evidence="1">3.6.5.-</ecNumber>
    </recommendedName>
    <alternativeName>
        <fullName evidence="1">GTP-binding protein Obg</fullName>
    </alternativeName>
</protein>
<sequence length="386" mass="41943">MKFIDEARIEVMAGRGGNGVASFRREKFVPFGGPDGGDGGKGGSVYAVADENVNTLVEYRFVKKYLAQHGERGRGADCYGKGGDDIELKMPVGTVIHDADTGELVADLTHHGQRVMIAKGGKGGLGNIHFKSSTNRAPRQCTPGEQGEQRTLKLELKVLADVGLLGMPNAGKSTFIRSVSAARPKVADYPFTTLHPNLGVVRMDDTRSFVIADIPGLIEGAAEGAGLGHRFLKHLQRTGLLLHVVDIAPFDPDVDPVREARAIVEELKKFDEELHGKPRWLVLNKVDMLPEDERELTVSAFLNAYGWPQERPDDSLGFDIKAPRVFTISALNHEGTRELTFAIMSYLDVVRAQARKEAEALQQQAAAAKQKVIMPEAPAVSEGDDA</sequence>
<reference key="1">
    <citation type="journal article" date="2003" name="Proc. Natl. Acad. Sci. U.S.A.">
        <title>The complete genome sequence of Chromobacterium violaceum reveals remarkable and exploitable bacterial adaptability.</title>
        <authorList>
            <person name="Vasconcelos A.T.R."/>
            <person name="de Almeida D.F."/>
            <person name="Hungria M."/>
            <person name="Guimaraes C.T."/>
            <person name="Antonio R.V."/>
            <person name="Almeida F.C."/>
            <person name="de Almeida L.G.P."/>
            <person name="de Almeida R."/>
            <person name="Alves-Gomes J.A."/>
            <person name="Andrade E.M."/>
            <person name="Araripe J."/>
            <person name="de Araujo M.F.F."/>
            <person name="Astolfi-Filho S."/>
            <person name="Azevedo V."/>
            <person name="Baptista A.J."/>
            <person name="Bataus L.A.M."/>
            <person name="Batista J.S."/>
            <person name="Belo A."/>
            <person name="van den Berg C."/>
            <person name="Bogo M."/>
            <person name="Bonatto S."/>
            <person name="Bordignon J."/>
            <person name="Brigido M.M."/>
            <person name="Brito C.A."/>
            <person name="Brocchi M."/>
            <person name="Burity H.A."/>
            <person name="Camargo A.A."/>
            <person name="Cardoso D.D.P."/>
            <person name="Carneiro N.P."/>
            <person name="Carraro D.M."/>
            <person name="Carvalho C.M.B."/>
            <person name="Cascardo J.C.M."/>
            <person name="Cavada B.S."/>
            <person name="Chueire L.M.O."/>
            <person name="Creczynski-Pasa T.B."/>
            <person name="Cunha-Junior N.C."/>
            <person name="Fagundes N."/>
            <person name="Falcao C.L."/>
            <person name="Fantinatti F."/>
            <person name="Farias I.P."/>
            <person name="Felipe M.S.S."/>
            <person name="Ferrari L.P."/>
            <person name="Ferro J.A."/>
            <person name="Ferro M.I.T."/>
            <person name="Franco G.R."/>
            <person name="Freitas N.S.A."/>
            <person name="Furlan L.R."/>
            <person name="Gazzinelli R.T."/>
            <person name="Gomes E.A."/>
            <person name="Goncalves P.R."/>
            <person name="Grangeiro T.B."/>
            <person name="Grattapaglia D."/>
            <person name="Grisard E.C."/>
            <person name="Hanna E.S."/>
            <person name="Jardim S.N."/>
            <person name="Laurino J."/>
            <person name="Leoi L.C.T."/>
            <person name="Lima L.F.A."/>
            <person name="Loureiro M.F."/>
            <person name="Lyra M.C.C.P."/>
            <person name="Madeira H.M.F."/>
            <person name="Manfio G.P."/>
            <person name="Maranhao A.Q."/>
            <person name="Martins W.S."/>
            <person name="di Mauro S.M.Z."/>
            <person name="de Medeiros S.R.B."/>
            <person name="Meissner R.V."/>
            <person name="Moreira M.A.M."/>
            <person name="Nascimento F.F."/>
            <person name="Nicolas M.F."/>
            <person name="Oliveira J.G."/>
            <person name="Oliveira S.C."/>
            <person name="Paixao R.F.C."/>
            <person name="Parente J.A."/>
            <person name="Pedrosa F.O."/>
            <person name="Pena S.D.J."/>
            <person name="Pereira J.O."/>
            <person name="Pereira M."/>
            <person name="Pinto L.S.R.C."/>
            <person name="Pinto L.S."/>
            <person name="Porto J.I.R."/>
            <person name="Potrich D.P."/>
            <person name="Ramalho-Neto C.E."/>
            <person name="Reis A.M.M."/>
            <person name="Rigo L.U."/>
            <person name="Rondinelli E."/>
            <person name="Santos E.B.P."/>
            <person name="Santos F.R."/>
            <person name="Schneider M.P.C."/>
            <person name="Seuanez H.N."/>
            <person name="Silva A.M.R."/>
            <person name="da Silva A.L.C."/>
            <person name="Silva D.W."/>
            <person name="Silva R."/>
            <person name="Simoes I.C."/>
            <person name="Simon D."/>
            <person name="Soares C.M.A."/>
            <person name="Soares R.B.A."/>
            <person name="Souza E.M."/>
            <person name="Souza K.R.L."/>
            <person name="Souza R.C."/>
            <person name="Steffens M.B.R."/>
            <person name="Steindel M."/>
            <person name="Teixeira S.R."/>
            <person name="Urmenyi T."/>
            <person name="Vettore A."/>
            <person name="Wassem R."/>
            <person name="Zaha A."/>
            <person name="Simpson A.J.G."/>
        </authorList>
    </citation>
    <scope>NUCLEOTIDE SEQUENCE [LARGE SCALE GENOMIC DNA]</scope>
    <source>
        <strain>ATCC 12472 / DSM 30191 / JCM 1249 / CCUG 213 / NBRC 12614 / NCIMB 9131 / NCTC 9757 / MK</strain>
    </source>
</reference>
<feature type="chain" id="PRO_0000385832" description="GTPase Obg">
    <location>
        <begin position="1"/>
        <end position="386"/>
    </location>
</feature>
<feature type="domain" description="Obg" evidence="2">
    <location>
        <begin position="1"/>
        <end position="159"/>
    </location>
</feature>
<feature type="domain" description="OBG-type G" evidence="1">
    <location>
        <begin position="160"/>
        <end position="348"/>
    </location>
</feature>
<feature type="binding site" evidence="1">
    <location>
        <begin position="166"/>
        <end position="173"/>
    </location>
    <ligand>
        <name>GTP</name>
        <dbReference type="ChEBI" id="CHEBI:37565"/>
    </ligand>
</feature>
<feature type="binding site" evidence="1">
    <location>
        <position position="173"/>
    </location>
    <ligand>
        <name>Mg(2+)</name>
        <dbReference type="ChEBI" id="CHEBI:18420"/>
    </ligand>
</feature>
<feature type="binding site" evidence="1">
    <location>
        <begin position="191"/>
        <end position="195"/>
    </location>
    <ligand>
        <name>GTP</name>
        <dbReference type="ChEBI" id="CHEBI:37565"/>
    </ligand>
</feature>
<feature type="binding site" evidence="1">
    <location>
        <position position="193"/>
    </location>
    <ligand>
        <name>Mg(2+)</name>
        <dbReference type="ChEBI" id="CHEBI:18420"/>
    </ligand>
</feature>
<feature type="binding site" evidence="1">
    <location>
        <begin position="213"/>
        <end position="216"/>
    </location>
    <ligand>
        <name>GTP</name>
        <dbReference type="ChEBI" id="CHEBI:37565"/>
    </ligand>
</feature>
<feature type="binding site" evidence="1">
    <location>
        <begin position="284"/>
        <end position="287"/>
    </location>
    <ligand>
        <name>GTP</name>
        <dbReference type="ChEBI" id="CHEBI:37565"/>
    </ligand>
</feature>
<feature type="binding site" evidence="1">
    <location>
        <begin position="329"/>
        <end position="331"/>
    </location>
    <ligand>
        <name>GTP</name>
        <dbReference type="ChEBI" id="CHEBI:37565"/>
    </ligand>
</feature>
<organism>
    <name type="scientific">Chromobacterium violaceum (strain ATCC 12472 / DSM 30191 / JCM 1249 / CCUG 213 / NBRC 12614 / NCIMB 9131 / NCTC 9757 / MK)</name>
    <dbReference type="NCBI Taxonomy" id="243365"/>
    <lineage>
        <taxon>Bacteria</taxon>
        <taxon>Pseudomonadati</taxon>
        <taxon>Pseudomonadota</taxon>
        <taxon>Betaproteobacteria</taxon>
        <taxon>Neisseriales</taxon>
        <taxon>Chromobacteriaceae</taxon>
        <taxon>Chromobacterium</taxon>
    </lineage>
</organism>
<dbReference type="EC" id="3.6.5.-" evidence="1"/>
<dbReference type="EMBL" id="AE016825">
    <property type="protein sequence ID" value="AAQ58525.1"/>
    <property type="molecule type" value="Genomic_DNA"/>
</dbReference>
<dbReference type="RefSeq" id="WP_011134405.1">
    <property type="nucleotide sequence ID" value="NC_005085.1"/>
</dbReference>
<dbReference type="SMR" id="Q7NZS1"/>
<dbReference type="STRING" id="243365.CV_0850"/>
<dbReference type="GeneID" id="66365250"/>
<dbReference type="KEGG" id="cvi:CV_0850"/>
<dbReference type="eggNOG" id="COG0536">
    <property type="taxonomic scope" value="Bacteria"/>
</dbReference>
<dbReference type="HOGENOM" id="CLU_011747_2_0_4"/>
<dbReference type="OrthoDB" id="9807318at2"/>
<dbReference type="Proteomes" id="UP000001424">
    <property type="component" value="Chromosome"/>
</dbReference>
<dbReference type="GO" id="GO:0005737">
    <property type="term" value="C:cytoplasm"/>
    <property type="evidence" value="ECO:0007669"/>
    <property type="project" value="UniProtKB-SubCell"/>
</dbReference>
<dbReference type="GO" id="GO:0005525">
    <property type="term" value="F:GTP binding"/>
    <property type="evidence" value="ECO:0007669"/>
    <property type="project" value="UniProtKB-UniRule"/>
</dbReference>
<dbReference type="GO" id="GO:0003924">
    <property type="term" value="F:GTPase activity"/>
    <property type="evidence" value="ECO:0007669"/>
    <property type="project" value="UniProtKB-UniRule"/>
</dbReference>
<dbReference type="GO" id="GO:0000287">
    <property type="term" value="F:magnesium ion binding"/>
    <property type="evidence" value="ECO:0007669"/>
    <property type="project" value="InterPro"/>
</dbReference>
<dbReference type="GO" id="GO:0042254">
    <property type="term" value="P:ribosome biogenesis"/>
    <property type="evidence" value="ECO:0007669"/>
    <property type="project" value="UniProtKB-UniRule"/>
</dbReference>
<dbReference type="CDD" id="cd01898">
    <property type="entry name" value="Obg"/>
    <property type="match status" value="1"/>
</dbReference>
<dbReference type="FunFam" id="2.70.210.12:FF:000001">
    <property type="entry name" value="GTPase Obg"/>
    <property type="match status" value="1"/>
</dbReference>
<dbReference type="Gene3D" id="2.70.210.12">
    <property type="entry name" value="GTP1/OBG domain"/>
    <property type="match status" value="1"/>
</dbReference>
<dbReference type="Gene3D" id="3.40.50.300">
    <property type="entry name" value="P-loop containing nucleotide triphosphate hydrolases"/>
    <property type="match status" value="1"/>
</dbReference>
<dbReference type="HAMAP" id="MF_01454">
    <property type="entry name" value="GTPase_Obg"/>
    <property type="match status" value="1"/>
</dbReference>
<dbReference type="InterPro" id="IPR031167">
    <property type="entry name" value="G_OBG"/>
</dbReference>
<dbReference type="InterPro" id="IPR006073">
    <property type="entry name" value="GTP-bd"/>
</dbReference>
<dbReference type="InterPro" id="IPR014100">
    <property type="entry name" value="GTP-bd_Obg/CgtA"/>
</dbReference>
<dbReference type="InterPro" id="IPR006074">
    <property type="entry name" value="GTP1-OBG_CS"/>
</dbReference>
<dbReference type="InterPro" id="IPR006169">
    <property type="entry name" value="GTP1_OBG_dom"/>
</dbReference>
<dbReference type="InterPro" id="IPR036726">
    <property type="entry name" value="GTP1_OBG_dom_sf"/>
</dbReference>
<dbReference type="InterPro" id="IPR045086">
    <property type="entry name" value="OBG_GTPase"/>
</dbReference>
<dbReference type="InterPro" id="IPR027417">
    <property type="entry name" value="P-loop_NTPase"/>
</dbReference>
<dbReference type="NCBIfam" id="TIGR02729">
    <property type="entry name" value="Obg_CgtA"/>
    <property type="match status" value="1"/>
</dbReference>
<dbReference type="NCBIfam" id="NF008954">
    <property type="entry name" value="PRK12296.1"/>
    <property type="match status" value="1"/>
</dbReference>
<dbReference type="NCBIfam" id="NF008955">
    <property type="entry name" value="PRK12297.1"/>
    <property type="match status" value="1"/>
</dbReference>
<dbReference type="NCBIfam" id="NF008956">
    <property type="entry name" value="PRK12299.1"/>
    <property type="match status" value="1"/>
</dbReference>
<dbReference type="PANTHER" id="PTHR11702">
    <property type="entry name" value="DEVELOPMENTALLY REGULATED GTP-BINDING PROTEIN-RELATED"/>
    <property type="match status" value="1"/>
</dbReference>
<dbReference type="PANTHER" id="PTHR11702:SF31">
    <property type="entry name" value="MITOCHONDRIAL RIBOSOME-ASSOCIATED GTPASE 2"/>
    <property type="match status" value="1"/>
</dbReference>
<dbReference type="Pfam" id="PF01018">
    <property type="entry name" value="GTP1_OBG"/>
    <property type="match status" value="1"/>
</dbReference>
<dbReference type="Pfam" id="PF01926">
    <property type="entry name" value="MMR_HSR1"/>
    <property type="match status" value="1"/>
</dbReference>
<dbReference type="PIRSF" id="PIRSF002401">
    <property type="entry name" value="GTP_bd_Obg/CgtA"/>
    <property type="match status" value="1"/>
</dbReference>
<dbReference type="PRINTS" id="PR00326">
    <property type="entry name" value="GTP1OBG"/>
</dbReference>
<dbReference type="SUPFAM" id="SSF82051">
    <property type="entry name" value="Obg GTP-binding protein N-terminal domain"/>
    <property type="match status" value="1"/>
</dbReference>
<dbReference type="SUPFAM" id="SSF52540">
    <property type="entry name" value="P-loop containing nucleoside triphosphate hydrolases"/>
    <property type="match status" value="1"/>
</dbReference>
<dbReference type="PROSITE" id="PS51710">
    <property type="entry name" value="G_OBG"/>
    <property type="match status" value="1"/>
</dbReference>
<dbReference type="PROSITE" id="PS00905">
    <property type="entry name" value="GTP1_OBG"/>
    <property type="match status" value="1"/>
</dbReference>
<dbReference type="PROSITE" id="PS51883">
    <property type="entry name" value="OBG"/>
    <property type="match status" value="1"/>
</dbReference>
<comment type="function">
    <text evidence="1">An essential GTPase which binds GTP, GDP and possibly (p)ppGpp with moderate affinity, with high nucleotide exchange rates and a fairly low GTP hydrolysis rate. Plays a role in control of the cell cycle, stress response, ribosome biogenesis and in those bacteria that undergo differentiation, in morphogenesis control.</text>
</comment>
<comment type="cofactor">
    <cofactor evidence="1">
        <name>Mg(2+)</name>
        <dbReference type="ChEBI" id="CHEBI:18420"/>
    </cofactor>
</comment>
<comment type="subunit">
    <text evidence="1">Monomer.</text>
</comment>
<comment type="subcellular location">
    <subcellularLocation>
        <location evidence="1">Cytoplasm</location>
    </subcellularLocation>
</comment>
<comment type="similarity">
    <text evidence="1">Belongs to the TRAFAC class OBG-HflX-like GTPase superfamily. OBG GTPase family.</text>
</comment>
<gene>
    <name evidence="1" type="primary">obg</name>
    <name type="ordered locus">CV_0850</name>
</gene>
<name>OBG_CHRVO</name>
<keyword id="KW-0963">Cytoplasm</keyword>
<keyword id="KW-0342">GTP-binding</keyword>
<keyword id="KW-0378">Hydrolase</keyword>
<keyword id="KW-0460">Magnesium</keyword>
<keyword id="KW-0479">Metal-binding</keyword>
<keyword id="KW-0547">Nucleotide-binding</keyword>
<keyword id="KW-1185">Reference proteome</keyword>
<accession>Q7NZS1</accession>
<proteinExistence type="inferred from homology"/>
<evidence type="ECO:0000255" key="1">
    <source>
        <dbReference type="HAMAP-Rule" id="MF_01454"/>
    </source>
</evidence>
<evidence type="ECO:0000255" key="2">
    <source>
        <dbReference type="PROSITE-ProRule" id="PRU01231"/>
    </source>
</evidence>